<reference key="1">
    <citation type="journal article" date="2004" name="Genome Res.">
        <title>The status, quality, and expansion of the NIH full-length cDNA project: the Mammalian Gene Collection (MGC).</title>
        <authorList>
            <consortium name="The MGC Project Team"/>
        </authorList>
    </citation>
    <scope>NUCLEOTIDE SEQUENCE [LARGE SCALE MRNA]</scope>
    <source>
        <tissue>Testis</tissue>
    </source>
</reference>
<reference key="2">
    <citation type="journal article" date="2012" name="Nat. Commun.">
        <title>Quantitative maps of protein phosphorylation sites across 14 different rat organs and tissues.</title>
        <authorList>
            <person name="Lundby A."/>
            <person name="Secher A."/>
            <person name="Lage K."/>
            <person name="Nordsborg N.B."/>
            <person name="Dmytriyev A."/>
            <person name="Lundby C."/>
            <person name="Olsen J.V."/>
        </authorList>
    </citation>
    <scope>IDENTIFICATION BY MASS SPECTROMETRY [LARGE SCALE ANALYSIS]</scope>
</reference>
<keyword id="KW-0966">Cell projection</keyword>
<keyword id="KW-0969">Cilium</keyword>
<keyword id="KW-0963">Cytoplasm</keyword>
<keyword id="KW-0206">Cytoskeleton</keyword>
<keyword id="KW-0597">Phosphoprotein</keyword>
<keyword id="KW-1185">Reference proteome</keyword>
<sequence>MADNSSDEYEEDNKEKKKPSQLTPQQGFSENDDDDDDDSSETDSDDDDDDEEHGAPLEGAYDPADYEHLPVSAEIKELFEYISRYTPQLIDLDHKLKPFIPDFIPAVGDIDAFLKVPRPDGKPDHLGLLVLDEPSTKQSDPTVLSLWLTENSKQHNITQHMKVKSLEDAEKNPKAIDTWIESISELHRSKPPATVHYTRPMPDIDTLMQEWSPEFEELLGKVSLPTVEIDCSLAEYIDMICAILDIPFYKSRIQSLHLLFSLYSEFKNSQHFKALAEGKKTFTPPSNSASQAGDAETLSFL</sequence>
<feature type="chain" id="PRO_0000085518" description="Intraflagellar transport protein 46 homolog">
    <location>
        <begin position="1"/>
        <end position="301"/>
    </location>
</feature>
<feature type="region of interest" description="Disordered" evidence="4">
    <location>
        <begin position="1"/>
        <end position="66"/>
    </location>
</feature>
<feature type="compositionally biased region" description="Acidic residues" evidence="4">
    <location>
        <begin position="1"/>
        <end position="12"/>
    </location>
</feature>
<feature type="compositionally biased region" description="Acidic residues" evidence="4">
    <location>
        <begin position="30"/>
        <end position="52"/>
    </location>
</feature>
<feature type="modified residue" description="Phosphothreonine" evidence="2">
    <location>
        <position position="283"/>
    </location>
</feature>
<gene>
    <name type="primary">Ift46</name>
</gene>
<organism>
    <name type="scientific">Rattus norvegicus</name>
    <name type="common">Rat</name>
    <dbReference type="NCBI Taxonomy" id="10116"/>
    <lineage>
        <taxon>Eukaryota</taxon>
        <taxon>Metazoa</taxon>
        <taxon>Chordata</taxon>
        <taxon>Craniata</taxon>
        <taxon>Vertebrata</taxon>
        <taxon>Euteleostomi</taxon>
        <taxon>Mammalia</taxon>
        <taxon>Eutheria</taxon>
        <taxon>Euarchontoglires</taxon>
        <taxon>Glires</taxon>
        <taxon>Rodentia</taxon>
        <taxon>Myomorpha</taxon>
        <taxon>Muroidea</taxon>
        <taxon>Muridae</taxon>
        <taxon>Murinae</taxon>
        <taxon>Rattus</taxon>
    </lineage>
</organism>
<name>IFT46_RAT</name>
<protein>
    <recommendedName>
        <fullName>Intraflagellar transport protein 46 homolog</fullName>
    </recommendedName>
</protein>
<comment type="function">
    <text evidence="1">Forms part of a complex involved in intraflagellar transport (IFT), the bi-directional movement of particles required for the assembly, maintenance and functioning of primary cilia. May play a role in chondrocyte maturation and skeletogenesis (By similarity).</text>
</comment>
<comment type="subunit">
    <text evidence="2 3">Component of the IFT complex B, at least composed of IFT20, IFT22, IFT25, IFT27, IFT46, IFT52, TRAF3IP1/IFT54, IFT57, IFT74, IFT80, IFT81, and IFT88. Interacts with IFT57, IFT88 and DAW1. Interacts with ARL13B. Interacts with IFT56 (By similarity). Interacts with TTC25 (By similarity). Interacts with IFT70B (By similarity).</text>
</comment>
<comment type="subcellular location">
    <subcellularLocation>
        <location evidence="1">Cytoplasm</location>
        <location evidence="1">Cytoskeleton</location>
        <location evidence="1">Cilium basal body</location>
    </subcellularLocation>
    <subcellularLocation>
        <location evidence="1">Cell projection</location>
        <location evidence="1">Cilium</location>
    </subcellularLocation>
    <text evidence="1">Expression is concentrated at the cilium basal body but is also detected along the length of the cilium.</text>
</comment>
<comment type="similarity">
    <text evidence="5">Belongs to the IFT46 family.</text>
</comment>
<evidence type="ECO:0000250" key="1"/>
<evidence type="ECO:0000250" key="2">
    <source>
        <dbReference type="UniProtKB" id="Q9DB07"/>
    </source>
</evidence>
<evidence type="ECO:0000250" key="3">
    <source>
        <dbReference type="UniProtKB" id="Q9NQC8"/>
    </source>
</evidence>
<evidence type="ECO:0000256" key="4">
    <source>
        <dbReference type="SAM" id="MobiDB-lite"/>
    </source>
</evidence>
<evidence type="ECO:0000305" key="5"/>
<accession>Q6AXQ9</accession>
<accession>Q4V7E9</accession>
<dbReference type="EMBL" id="BC079388">
    <property type="protein sequence ID" value="AAH79388.2"/>
    <property type="molecule type" value="mRNA"/>
</dbReference>
<dbReference type="EMBL" id="BC097954">
    <property type="protein sequence ID" value="AAH97954.1"/>
    <property type="molecule type" value="mRNA"/>
</dbReference>
<dbReference type="RefSeq" id="NP_001019931.1">
    <property type="nucleotide sequence ID" value="NM_001024760.1"/>
</dbReference>
<dbReference type="RefSeq" id="XP_006242992.1">
    <property type="nucleotide sequence ID" value="XM_006242930.5"/>
</dbReference>
<dbReference type="RefSeq" id="XP_006242993.1">
    <property type="nucleotide sequence ID" value="XM_006242931.3"/>
</dbReference>
<dbReference type="RefSeq" id="XP_038936985.1">
    <property type="nucleotide sequence ID" value="XM_039081057.2"/>
</dbReference>
<dbReference type="SMR" id="Q6AXQ9"/>
<dbReference type="FunCoup" id="Q6AXQ9">
    <property type="interactions" value="1359"/>
</dbReference>
<dbReference type="STRING" id="10116.ENSRNOP00000019011"/>
<dbReference type="iPTMnet" id="Q6AXQ9"/>
<dbReference type="PhosphoSitePlus" id="Q6AXQ9"/>
<dbReference type="jPOST" id="Q6AXQ9"/>
<dbReference type="PaxDb" id="10116-ENSRNOP00000019011"/>
<dbReference type="GeneID" id="300675"/>
<dbReference type="KEGG" id="rno:300675"/>
<dbReference type="UCSC" id="RGD:1307682">
    <property type="organism name" value="rat"/>
</dbReference>
<dbReference type="AGR" id="RGD:1307682"/>
<dbReference type="CTD" id="56912"/>
<dbReference type="RGD" id="1307682">
    <property type="gene designation" value="Ift46"/>
</dbReference>
<dbReference type="VEuPathDB" id="HostDB:ENSRNOG00000013919"/>
<dbReference type="eggNOG" id="ENOG502QPNA">
    <property type="taxonomic scope" value="Eukaryota"/>
</dbReference>
<dbReference type="InParanoid" id="Q6AXQ9"/>
<dbReference type="OrthoDB" id="2119217at2759"/>
<dbReference type="PhylomeDB" id="Q6AXQ9"/>
<dbReference type="TreeFam" id="TF314221"/>
<dbReference type="Reactome" id="R-RNO-5620924">
    <property type="pathway name" value="Intraflagellar transport"/>
</dbReference>
<dbReference type="PRO" id="PR:Q6AXQ9"/>
<dbReference type="Proteomes" id="UP000002494">
    <property type="component" value="Chromosome 8"/>
</dbReference>
<dbReference type="Bgee" id="ENSRNOG00000013919">
    <property type="expression patterns" value="Expressed in testis and 20 other cell types or tissues"/>
</dbReference>
<dbReference type="GO" id="GO:0005813">
    <property type="term" value="C:centrosome"/>
    <property type="evidence" value="ECO:0000266"/>
    <property type="project" value="RGD"/>
</dbReference>
<dbReference type="GO" id="GO:0005929">
    <property type="term" value="C:cilium"/>
    <property type="evidence" value="ECO:0000266"/>
    <property type="project" value="RGD"/>
</dbReference>
<dbReference type="GO" id="GO:0005737">
    <property type="term" value="C:cytoplasm"/>
    <property type="evidence" value="ECO:0007669"/>
    <property type="project" value="UniProtKB-KW"/>
</dbReference>
<dbReference type="GO" id="GO:0030992">
    <property type="term" value="C:intraciliary transport particle B"/>
    <property type="evidence" value="ECO:0000250"/>
    <property type="project" value="UniProtKB"/>
</dbReference>
<dbReference type="GO" id="GO:0005815">
    <property type="term" value="C:microtubule organizing center"/>
    <property type="evidence" value="ECO:0000318"/>
    <property type="project" value="GO_Central"/>
</dbReference>
<dbReference type="GO" id="GO:0031514">
    <property type="term" value="C:motile cilium"/>
    <property type="evidence" value="ECO:0000266"/>
    <property type="project" value="RGD"/>
</dbReference>
<dbReference type="GO" id="GO:0060271">
    <property type="term" value="P:cilium assembly"/>
    <property type="evidence" value="ECO:0000266"/>
    <property type="project" value="RGD"/>
</dbReference>
<dbReference type="GO" id="GO:0042073">
    <property type="term" value="P:intraciliary transport"/>
    <property type="evidence" value="ECO:0000318"/>
    <property type="project" value="GO_Central"/>
</dbReference>
<dbReference type="GO" id="GO:0007224">
    <property type="term" value="P:smoothened signaling pathway"/>
    <property type="evidence" value="ECO:0000266"/>
    <property type="project" value="RGD"/>
</dbReference>
<dbReference type="InterPro" id="IPR022088">
    <property type="entry name" value="Intraflagellar_transp_cmplxB"/>
</dbReference>
<dbReference type="PANTHER" id="PTHR13376">
    <property type="entry name" value="INTRAFLAGELLAR TRANSPORT PROTEIN 46 HOMOLOG"/>
    <property type="match status" value="1"/>
</dbReference>
<dbReference type="PANTHER" id="PTHR13376:SF0">
    <property type="entry name" value="INTRAFLAGELLAR TRANSPORT PROTEIN 46 HOMOLOG"/>
    <property type="match status" value="1"/>
</dbReference>
<dbReference type="Pfam" id="PF12317">
    <property type="entry name" value="IFT46_B_C"/>
    <property type="match status" value="1"/>
</dbReference>
<proteinExistence type="evidence at protein level"/>